<reference key="1">
    <citation type="journal article" date="1995" name="Mol. Biochem. Parasitol.">
        <title>Three genes and two isozymes: gene conversion and the compartmentalization and expression of the phosphoglycerate kinases of Trypanosoma (Nannomonas) congolense.</title>
        <authorList>
            <person name="Parker H.L."/>
            <person name="Hill T."/>
            <person name="Alexander K.A."/>
            <person name="Murphy N.B."/>
            <person name="Fish W.R."/>
            <person name="Parsons M."/>
        </authorList>
    </citation>
    <scope>NUCLEOTIDE SEQUENCE [GENOMIC DNA]</scope>
    <source>
        <strain>IL3000</strain>
    </source>
</reference>
<comment type="catalytic activity">
    <reaction evidence="1">
        <text>(2R)-3-phosphoglycerate + ATP = (2R)-3-phospho-glyceroyl phosphate + ADP</text>
        <dbReference type="Rhea" id="RHEA:14801"/>
        <dbReference type="ChEBI" id="CHEBI:30616"/>
        <dbReference type="ChEBI" id="CHEBI:57604"/>
        <dbReference type="ChEBI" id="CHEBI:58272"/>
        <dbReference type="ChEBI" id="CHEBI:456216"/>
        <dbReference type="EC" id="2.7.2.3"/>
    </reaction>
</comment>
<comment type="cofactor">
    <cofactor evidence="2">
        <name>Mg(2+)</name>
        <dbReference type="ChEBI" id="CHEBI:18420"/>
    </cofactor>
</comment>
<comment type="pathway">
    <text>Carbohydrate degradation; glycolysis; pyruvate from D-glyceraldehyde 3-phosphate: step 2/5.</text>
</comment>
<comment type="subunit">
    <text>Monomer.</text>
</comment>
<comment type="subcellular location">
    <subcellularLocation>
        <location>Cytoplasm</location>
    </subcellularLocation>
</comment>
<comment type="similarity">
    <text evidence="4">Belongs to the phosphoglycerate kinase family.</text>
</comment>
<protein>
    <recommendedName>
        <fullName>Phosphoglycerate kinase, cytosolic</fullName>
        <ecNumber evidence="1">2.7.2.3</ecNumber>
    </recommendedName>
</protein>
<organism>
    <name type="scientific">Trypanosoma congolense</name>
    <dbReference type="NCBI Taxonomy" id="5692"/>
    <lineage>
        <taxon>Eukaryota</taxon>
        <taxon>Discoba</taxon>
        <taxon>Euglenozoa</taxon>
        <taxon>Kinetoplastea</taxon>
        <taxon>Metakinetoplastina</taxon>
        <taxon>Trypanosomatida</taxon>
        <taxon>Trypanosomatidae</taxon>
        <taxon>Trypanosoma</taxon>
        <taxon>Nannomonas</taxon>
    </lineage>
</organism>
<evidence type="ECO:0000250" key="1">
    <source>
        <dbReference type="UniProtKB" id="P00558"/>
    </source>
</evidence>
<evidence type="ECO:0000250" key="2">
    <source>
        <dbReference type="UniProtKB" id="P07378"/>
    </source>
</evidence>
<evidence type="ECO:0000250" key="3">
    <source>
        <dbReference type="UniProtKB" id="Q7SIB7"/>
    </source>
</evidence>
<evidence type="ECO:0000305" key="4"/>
<name>PGK1_TRYCO</name>
<keyword id="KW-0067">ATP-binding</keyword>
<keyword id="KW-0963">Cytoplasm</keyword>
<keyword id="KW-0324">Glycolysis</keyword>
<keyword id="KW-0418">Kinase</keyword>
<keyword id="KW-0460">Magnesium</keyword>
<keyword id="KW-0479">Metal-binding</keyword>
<keyword id="KW-0547">Nucleotide-binding</keyword>
<keyword id="KW-0808">Transferase</keyword>
<dbReference type="EC" id="2.7.2.3" evidence="1"/>
<dbReference type="EMBL" id="L37337">
    <property type="protein sequence ID" value="AAC37222.1"/>
    <property type="molecule type" value="Genomic_DNA"/>
</dbReference>
<dbReference type="EMBL" id="L37337">
    <property type="protein sequence ID" value="AAC37223.1"/>
    <property type="molecule type" value="Genomic_DNA"/>
</dbReference>
<dbReference type="EMBL" id="L37336">
    <property type="protein sequence ID" value="AAC37224.1"/>
    <property type="molecule type" value="Genomic_DNA"/>
</dbReference>
<dbReference type="EMBL" id="L37336">
    <property type="protein sequence ID" value="AAC37225.1"/>
    <property type="molecule type" value="Genomic_DNA"/>
</dbReference>
<dbReference type="SMR" id="P41760"/>
<dbReference type="VEuPathDB" id="TriTrypDB:TcIL3000.A.H_000275200"/>
<dbReference type="VEuPathDB" id="TriTrypDB:TcIL3000.A.H_000275300"/>
<dbReference type="VEuPathDB" id="TriTrypDB:TcIL3000_1_220"/>
<dbReference type="OMA" id="YAIPDGW"/>
<dbReference type="UniPathway" id="UPA00109">
    <property type="reaction ID" value="UER00185"/>
</dbReference>
<dbReference type="GO" id="GO:0005829">
    <property type="term" value="C:cytosol"/>
    <property type="evidence" value="ECO:0007669"/>
    <property type="project" value="TreeGrafter"/>
</dbReference>
<dbReference type="GO" id="GO:0043531">
    <property type="term" value="F:ADP binding"/>
    <property type="evidence" value="ECO:0007669"/>
    <property type="project" value="TreeGrafter"/>
</dbReference>
<dbReference type="GO" id="GO:0005524">
    <property type="term" value="F:ATP binding"/>
    <property type="evidence" value="ECO:0007669"/>
    <property type="project" value="UniProtKB-KW"/>
</dbReference>
<dbReference type="GO" id="GO:0046872">
    <property type="term" value="F:metal ion binding"/>
    <property type="evidence" value="ECO:0007669"/>
    <property type="project" value="UniProtKB-KW"/>
</dbReference>
<dbReference type="GO" id="GO:0004618">
    <property type="term" value="F:phosphoglycerate kinase activity"/>
    <property type="evidence" value="ECO:0007669"/>
    <property type="project" value="UniProtKB-EC"/>
</dbReference>
<dbReference type="GO" id="GO:0006094">
    <property type="term" value="P:gluconeogenesis"/>
    <property type="evidence" value="ECO:0007669"/>
    <property type="project" value="TreeGrafter"/>
</dbReference>
<dbReference type="GO" id="GO:0006096">
    <property type="term" value="P:glycolytic process"/>
    <property type="evidence" value="ECO:0007669"/>
    <property type="project" value="UniProtKB-UniPathway"/>
</dbReference>
<dbReference type="CDD" id="cd00318">
    <property type="entry name" value="Phosphoglycerate_kinase"/>
    <property type="match status" value="1"/>
</dbReference>
<dbReference type="FunFam" id="3.40.50.1260:FF:000007">
    <property type="entry name" value="Phosphoglycerate kinase"/>
    <property type="match status" value="1"/>
</dbReference>
<dbReference type="FunFam" id="3.40.50.1260:FF:000011">
    <property type="entry name" value="Phosphoglycerate kinase"/>
    <property type="match status" value="1"/>
</dbReference>
<dbReference type="Gene3D" id="3.40.50.1260">
    <property type="entry name" value="Phosphoglycerate kinase, N-terminal domain"/>
    <property type="match status" value="2"/>
</dbReference>
<dbReference type="HAMAP" id="MF_00145">
    <property type="entry name" value="Phosphoglyc_kinase"/>
    <property type="match status" value="1"/>
</dbReference>
<dbReference type="InterPro" id="IPR027250">
    <property type="entry name" value="Pgk_euglenozoa"/>
</dbReference>
<dbReference type="InterPro" id="IPR001576">
    <property type="entry name" value="Phosphoglycerate_kinase"/>
</dbReference>
<dbReference type="InterPro" id="IPR015911">
    <property type="entry name" value="Phosphoglycerate_kinase_CS"/>
</dbReference>
<dbReference type="InterPro" id="IPR015824">
    <property type="entry name" value="Phosphoglycerate_kinase_N"/>
</dbReference>
<dbReference type="InterPro" id="IPR036043">
    <property type="entry name" value="Phosphoglycerate_kinase_sf"/>
</dbReference>
<dbReference type="PANTHER" id="PTHR11406">
    <property type="entry name" value="PHOSPHOGLYCERATE KINASE"/>
    <property type="match status" value="1"/>
</dbReference>
<dbReference type="PANTHER" id="PTHR11406:SF23">
    <property type="entry name" value="PHOSPHOGLYCERATE KINASE 1, CHLOROPLASTIC-RELATED"/>
    <property type="match status" value="1"/>
</dbReference>
<dbReference type="Pfam" id="PF00162">
    <property type="entry name" value="PGK"/>
    <property type="match status" value="1"/>
</dbReference>
<dbReference type="PIRSF" id="PIRSF000724">
    <property type="entry name" value="Pgk"/>
    <property type="match status" value="1"/>
</dbReference>
<dbReference type="PIRSF" id="PIRSF500126">
    <property type="entry name" value="Pgk_euglenozoa"/>
    <property type="match status" value="1"/>
</dbReference>
<dbReference type="PRINTS" id="PR00477">
    <property type="entry name" value="PHGLYCKINASE"/>
</dbReference>
<dbReference type="SUPFAM" id="SSF53748">
    <property type="entry name" value="Phosphoglycerate kinase"/>
    <property type="match status" value="1"/>
</dbReference>
<dbReference type="PROSITE" id="PS00111">
    <property type="entry name" value="PGLYCERATE_KINASE"/>
    <property type="match status" value="1"/>
</dbReference>
<feature type="chain" id="PRO_0000145867" description="Phosphoglycerate kinase, cytosolic">
    <location>
        <begin position="1"/>
        <end position="420"/>
    </location>
</feature>
<feature type="binding site" evidence="1">
    <location>
        <position position="23"/>
    </location>
    <ligand>
        <name>(2R)-3-phosphoglycerate</name>
        <dbReference type="ChEBI" id="CHEBI:58272"/>
    </ligand>
</feature>
<feature type="binding site" evidence="3">
    <location>
        <position position="24"/>
    </location>
    <ligand>
        <name>(2R)-3-phosphoglycerate</name>
        <dbReference type="ChEBI" id="CHEBI:58272"/>
    </ligand>
</feature>
<feature type="binding site" evidence="1">
    <location>
        <position position="25"/>
    </location>
    <ligand>
        <name>(2R)-3-phosphoglycerate</name>
        <dbReference type="ChEBI" id="CHEBI:58272"/>
    </ligand>
</feature>
<feature type="binding site" evidence="3">
    <location>
        <position position="26"/>
    </location>
    <ligand>
        <name>(2R)-3-phosphoglycerate</name>
        <dbReference type="ChEBI" id="CHEBI:58272"/>
    </ligand>
</feature>
<feature type="binding site" evidence="3">
    <location>
        <position position="39"/>
    </location>
    <ligand>
        <name>(2R)-3-phosphoglycerate</name>
        <dbReference type="ChEBI" id="CHEBI:58272"/>
    </ligand>
</feature>
<feature type="binding site" evidence="1">
    <location>
        <position position="61"/>
    </location>
    <ligand>
        <name>(2R)-3-phosphoglycerate</name>
        <dbReference type="ChEBI" id="CHEBI:58272"/>
    </ligand>
</feature>
<feature type="binding site" evidence="3">
    <location>
        <position position="62"/>
    </location>
    <ligand>
        <name>(2R)-3-phosphoglycerate</name>
        <dbReference type="ChEBI" id="CHEBI:58272"/>
    </ligand>
</feature>
<feature type="binding site" evidence="1">
    <location>
        <position position="64"/>
    </location>
    <ligand>
        <name>(2R)-3-phosphoglycerate</name>
        <dbReference type="ChEBI" id="CHEBI:58272"/>
    </ligand>
</feature>
<feature type="binding site" evidence="3">
    <location>
        <position position="65"/>
    </location>
    <ligand>
        <name>(2R)-3-phosphoglycerate</name>
        <dbReference type="ChEBI" id="CHEBI:58272"/>
    </ligand>
</feature>
<feature type="binding site" evidence="3">
    <location>
        <position position="135"/>
    </location>
    <ligand>
        <name>(2R)-3-phosphoglycerate</name>
        <dbReference type="ChEBI" id="CHEBI:58272"/>
    </ligand>
</feature>
<feature type="binding site" evidence="1">
    <location>
        <position position="171"/>
    </location>
    <ligand>
        <name>(2R)-3-phosphoglycerate</name>
        <dbReference type="ChEBI" id="CHEBI:58272"/>
    </ligand>
</feature>
<feature type="binding site" evidence="3">
    <location>
        <position position="172"/>
    </location>
    <ligand>
        <name>(2R)-3-phosphoglycerate</name>
        <dbReference type="ChEBI" id="CHEBI:58272"/>
    </ligand>
</feature>
<feature type="binding site" evidence="1">
    <location>
        <position position="217"/>
    </location>
    <ligand>
        <name>ADP</name>
        <dbReference type="ChEBI" id="CHEBI:456216"/>
    </ligand>
</feature>
<feature type="binding site" evidence="1">
    <location>
        <position position="217"/>
    </location>
    <ligand>
        <name>CDP</name>
        <dbReference type="ChEBI" id="CHEBI:58069"/>
    </ligand>
</feature>
<feature type="binding site" evidence="2">
    <location>
        <position position="219"/>
    </location>
    <ligand>
        <name>(2R)-3-phosphoglycerate</name>
        <dbReference type="ChEBI" id="CHEBI:58272"/>
    </ligand>
</feature>
<feature type="binding site" evidence="3">
    <location>
        <position position="219"/>
    </location>
    <ligand>
        <name>AMP</name>
        <dbReference type="ChEBI" id="CHEBI:456215"/>
    </ligand>
</feature>
<feature type="binding site" evidence="1">
    <location>
        <position position="222"/>
    </location>
    <ligand>
        <name>CDP</name>
        <dbReference type="ChEBI" id="CHEBI:58069"/>
    </ligand>
</feature>
<feature type="binding site" evidence="1">
    <location>
        <position position="222"/>
    </location>
    <ligand>
        <name>Mg(2+)</name>
        <dbReference type="ChEBI" id="CHEBI:18420"/>
    </ligand>
</feature>
<feature type="binding site" evidence="2">
    <location>
        <position position="223"/>
    </location>
    <ligand>
        <name>ADP</name>
        <dbReference type="ChEBI" id="CHEBI:456216"/>
    </ligand>
</feature>
<feature type="binding site" evidence="3">
    <location>
        <position position="223"/>
    </location>
    <ligand>
        <name>AMP</name>
        <dbReference type="ChEBI" id="CHEBI:456215"/>
    </ligand>
</feature>
<feature type="binding site" evidence="3">
    <location>
        <position position="223"/>
    </location>
    <ligand>
        <name>ATP</name>
        <dbReference type="ChEBI" id="CHEBI:30616"/>
    </ligand>
</feature>
<feature type="binding site" evidence="1">
    <location>
        <position position="241"/>
    </location>
    <ligand>
        <name>ADP</name>
        <dbReference type="ChEBI" id="CHEBI:456216"/>
    </ligand>
</feature>
<feature type="binding site" evidence="1">
    <location>
        <position position="241"/>
    </location>
    <ligand>
        <name>CDP</name>
        <dbReference type="ChEBI" id="CHEBI:58069"/>
    </ligand>
</feature>
<feature type="binding site" evidence="3">
    <location>
        <position position="242"/>
    </location>
    <ligand>
        <name>AMP</name>
        <dbReference type="ChEBI" id="CHEBI:456215"/>
    </ligand>
</feature>
<feature type="binding site" evidence="3">
    <location>
        <position position="242"/>
    </location>
    <ligand>
        <name>ATP</name>
        <dbReference type="ChEBI" id="CHEBI:30616"/>
    </ligand>
</feature>
<feature type="binding site" evidence="2">
    <location>
        <position position="314"/>
    </location>
    <ligand>
        <name>ADP</name>
        <dbReference type="ChEBI" id="CHEBI:456216"/>
    </ligand>
</feature>
<feature type="binding site" evidence="3">
    <location>
        <position position="314"/>
    </location>
    <ligand>
        <name>AMP</name>
        <dbReference type="ChEBI" id="CHEBI:456215"/>
    </ligand>
</feature>
<feature type="binding site" evidence="3">
    <location>
        <position position="314"/>
    </location>
    <ligand>
        <name>ATP</name>
        <dbReference type="ChEBI" id="CHEBI:30616"/>
    </ligand>
</feature>
<feature type="binding site" evidence="2">
    <location>
        <position position="338"/>
    </location>
    <ligand>
        <name>ADP</name>
        <dbReference type="ChEBI" id="CHEBI:456216"/>
    </ligand>
</feature>
<feature type="binding site" evidence="1">
    <location>
        <position position="339"/>
    </location>
    <ligand>
        <name>CDP</name>
        <dbReference type="ChEBI" id="CHEBI:58069"/>
    </ligand>
</feature>
<feature type="binding site" evidence="1">
    <location>
        <position position="344"/>
    </location>
    <ligand>
        <name>ADP</name>
        <dbReference type="ChEBI" id="CHEBI:456216"/>
    </ligand>
</feature>
<feature type="binding site" evidence="1">
    <location>
        <position position="344"/>
    </location>
    <ligand>
        <name>CDP</name>
        <dbReference type="ChEBI" id="CHEBI:58069"/>
    </ligand>
</feature>
<feature type="binding site" evidence="2">
    <location>
        <position position="345"/>
    </location>
    <ligand>
        <name>ADP</name>
        <dbReference type="ChEBI" id="CHEBI:456216"/>
    </ligand>
</feature>
<feature type="binding site" evidence="3">
    <location>
        <position position="345"/>
    </location>
    <ligand>
        <name>AMP</name>
        <dbReference type="ChEBI" id="CHEBI:456215"/>
    </ligand>
</feature>
<feature type="binding site" evidence="3">
    <location>
        <position position="345"/>
    </location>
    <ligand>
        <name>ATP</name>
        <dbReference type="ChEBI" id="CHEBI:30616"/>
    </ligand>
</feature>
<feature type="binding site" evidence="2">
    <location>
        <position position="377"/>
    </location>
    <ligand>
        <name>ADP</name>
        <dbReference type="ChEBI" id="CHEBI:456216"/>
    </ligand>
</feature>
<feature type="binding site" evidence="3">
    <location>
        <position position="377"/>
    </location>
    <ligand>
        <name>ATP</name>
        <dbReference type="ChEBI" id="CHEBI:30616"/>
    </ligand>
</feature>
<feature type="binding site" evidence="3">
    <location>
        <position position="377"/>
    </location>
    <ligand>
        <name>Mg(2+)</name>
        <dbReference type="ChEBI" id="CHEBI:18420"/>
    </ligand>
</feature>
<feature type="binding site" evidence="2">
    <location>
        <position position="378"/>
    </location>
    <ligand>
        <name>ADP</name>
        <dbReference type="ChEBI" id="CHEBI:456216"/>
    </ligand>
</feature>
<feature type="binding site" evidence="3">
    <location>
        <position position="378"/>
    </location>
    <ligand>
        <name>ATP</name>
        <dbReference type="ChEBI" id="CHEBI:30616"/>
    </ligand>
</feature>
<accession>P41760</accession>
<accession>P41761</accession>
<gene>
    <name type="primary">C1PGK</name>
</gene>
<gene>
    <name type="primary">C2PGK</name>
</gene>
<sequence length="420" mass="44897">MTLNEKKSINECDLKGKKTLVRVDFNVPVKGGVITNDYRIRSALPTIQKVLNEGGSCILMSHLGRPKGISISEAAAVRSAGKVPGYEEAATLRPVAQRLGELLSKPVVFAPDCLDAADVVKKMSPGDVVLLENVRFYREEGSKKEEEREAMAKVLASYGDIFVSDAFGTAHRDSATMTGIPKVLGHGAAGYLMEKEISYFSKVLGNPPRPLVAIVGGSKVSDKIQLLDNMLQRIDYLLIGGAMAYTFLKAQGHRIGTSMCEEDRLDLARSLLKKAEDRKVQVLLPVDHVCHTEFKAVDTPVVTADADIPDGHMALDIGPKTIANYVETIGKCKSAIWNGPMGVFEMTPYSKGTFAVAKAMGDCTQKNGLMSIIGGGDSASAAEQSGEATRMSHVSTGGGASLELLEGKTLPGVAILDEKV</sequence>
<proteinExistence type="inferred from homology"/>